<organism>
    <name type="scientific">Lachnoclostridium phytofermentans (strain ATCC 700394 / DSM 18823 / ISDg)</name>
    <name type="common">Clostridium phytofermentans</name>
    <dbReference type="NCBI Taxonomy" id="357809"/>
    <lineage>
        <taxon>Bacteria</taxon>
        <taxon>Bacillati</taxon>
        <taxon>Bacillota</taxon>
        <taxon>Clostridia</taxon>
        <taxon>Lachnospirales</taxon>
        <taxon>Lachnospiraceae</taxon>
    </lineage>
</organism>
<reference key="1">
    <citation type="submission" date="2007-11" db="EMBL/GenBank/DDBJ databases">
        <title>Complete genome sequence of Clostridium phytofermentans ISDg.</title>
        <authorList>
            <person name="Leschine S.B."/>
            <person name="Warnick T.A."/>
            <person name="Blanchard J.L."/>
            <person name="Schnell D.J."/>
            <person name="Petit E.L."/>
            <person name="LaTouf W.G."/>
            <person name="Copeland A."/>
            <person name="Lucas S."/>
            <person name="Lapidus A."/>
            <person name="Barry K."/>
            <person name="Glavina del Rio T."/>
            <person name="Dalin E."/>
            <person name="Tice H."/>
            <person name="Pitluck S."/>
            <person name="Kiss H."/>
            <person name="Brettin T."/>
            <person name="Bruce D."/>
            <person name="Detter J.C."/>
            <person name="Han C."/>
            <person name="Kuske C."/>
            <person name="Schmutz J."/>
            <person name="Larimer F."/>
            <person name="Land M."/>
            <person name="Hauser L."/>
            <person name="Kyrpides N."/>
            <person name="Kim E.A."/>
            <person name="Richardson P."/>
        </authorList>
    </citation>
    <scope>NUCLEOTIDE SEQUENCE [LARGE SCALE GENOMIC DNA]</scope>
    <source>
        <strain>ATCC 700394 / DSM 18823 / ISDg</strain>
    </source>
</reference>
<keyword id="KW-0963">Cytoplasm</keyword>
<keyword id="KW-1185">Reference proteome</keyword>
<keyword id="KW-0694">RNA-binding</keyword>
<dbReference type="EMBL" id="CP000885">
    <property type="protein sequence ID" value="ABX43225.1"/>
    <property type="molecule type" value="Genomic_DNA"/>
</dbReference>
<dbReference type="RefSeq" id="WP_012200876.1">
    <property type="nucleotide sequence ID" value="NC_010001.1"/>
</dbReference>
<dbReference type="SMR" id="A9KPF1"/>
<dbReference type="STRING" id="357809.Cphy_2865"/>
<dbReference type="KEGG" id="cpy:Cphy_2865"/>
<dbReference type="eggNOG" id="COG0691">
    <property type="taxonomic scope" value="Bacteria"/>
</dbReference>
<dbReference type="HOGENOM" id="CLU_108953_0_0_9"/>
<dbReference type="OrthoDB" id="9805462at2"/>
<dbReference type="Proteomes" id="UP000000370">
    <property type="component" value="Chromosome"/>
</dbReference>
<dbReference type="GO" id="GO:0005829">
    <property type="term" value="C:cytosol"/>
    <property type="evidence" value="ECO:0007669"/>
    <property type="project" value="TreeGrafter"/>
</dbReference>
<dbReference type="GO" id="GO:0003723">
    <property type="term" value="F:RNA binding"/>
    <property type="evidence" value="ECO:0007669"/>
    <property type="project" value="UniProtKB-UniRule"/>
</dbReference>
<dbReference type="GO" id="GO:0070929">
    <property type="term" value="P:trans-translation"/>
    <property type="evidence" value="ECO:0007669"/>
    <property type="project" value="UniProtKB-UniRule"/>
</dbReference>
<dbReference type="CDD" id="cd09294">
    <property type="entry name" value="SmpB"/>
    <property type="match status" value="1"/>
</dbReference>
<dbReference type="Gene3D" id="2.40.280.10">
    <property type="match status" value="1"/>
</dbReference>
<dbReference type="HAMAP" id="MF_00023">
    <property type="entry name" value="SmpB"/>
    <property type="match status" value="1"/>
</dbReference>
<dbReference type="InterPro" id="IPR023620">
    <property type="entry name" value="SmpB"/>
</dbReference>
<dbReference type="InterPro" id="IPR000037">
    <property type="entry name" value="SsrA-bd_prot"/>
</dbReference>
<dbReference type="InterPro" id="IPR020081">
    <property type="entry name" value="SsrA-bd_prot_CS"/>
</dbReference>
<dbReference type="NCBIfam" id="NF003843">
    <property type="entry name" value="PRK05422.1"/>
    <property type="match status" value="1"/>
</dbReference>
<dbReference type="NCBIfam" id="TIGR00086">
    <property type="entry name" value="smpB"/>
    <property type="match status" value="1"/>
</dbReference>
<dbReference type="PANTHER" id="PTHR30308:SF2">
    <property type="entry name" value="SSRA-BINDING PROTEIN"/>
    <property type="match status" value="1"/>
</dbReference>
<dbReference type="PANTHER" id="PTHR30308">
    <property type="entry name" value="TMRNA-BINDING COMPONENT OF TRANS-TRANSLATION TAGGING COMPLEX"/>
    <property type="match status" value="1"/>
</dbReference>
<dbReference type="Pfam" id="PF01668">
    <property type="entry name" value="SmpB"/>
    <property type="match status" value="1"/>
</dbReference>
<dbReference type="SUPFAM" id="SSF74982">
    <property type="entry name" value="Small protein B (SmpB)"/>
    <property type="match status" value="1"/>
</dbReference>
<dbReference type="PROSITE" id="PS01317">
    <property type="entry name" value="SSRP"/>
    <property type="match status" value="1"/>
</dbReference>
<name>SSRP_LACP7</name>
<accession>A9KPF1</accession>
<evidence type="ECO:0000255" key="1">
    <source>
        <dbReference type="HAMAP-Rule" id="MF_00023"/>
    </source>
</evidence>
<gene>
    <name evidence="1" type="primary">smpB</name>
    <name type="ordered locus">Cphy_2865</name>
</gene>
<comment type="function">
    <text evidence="1">Required for rescue of stalled ribosomes mediated by trans-translation. Binds to transfer-messenger RNA (tmRNA), required for stable association of tmRNA with ribosomes. tmRNA and SmpB together mimic tRNA shape, replacing the anticodon stem-loop with SmpB. tmRNA is encoded by the ssrA gene; the 2 termini fold to resemble tRNA(Ala) and it encodes a 'tag peptide', a short internal open reading frame. During trans-translation Ala-aminoacylated tmRNA acts like a tRNA, entering the A-site of stalled ribosomes, displacing the stalled mRNA. The ribosome then switches to translate the ORF on the tmRNA; the nascent peptide is terminated with the 'tag peptide' encoded by the tmRNA and targeted for degradation. The ribosome is freed to recommence translation, which seems to be the essential function of trans-translation.</text>
</comment>
<comment type="subcellular location">
    <subcellularLocation>
        <location evidence="1">Cytoplasm</location>
    </subcellularLocation>
    <text evidence="1">The tmRNA-SmpB complex associates with stalled 70S ribosomes.</text>
</comment>
<comment type="similarity">
    <text evidence="1">Belongs to the SmpB family.</text>
</comment>
<sequence length="154" mass="17943">MAKEGIKLIANNKKARFDYFIEETYEAGVVLHGTEVKSLRMGKCSIKESFMRIENGEVYVYNMHISPYEKGNIFNKDPLRVKKLLLHKFQINKIVGQIQQKGYTLVPLTIYLKDSLVKMEIGVARGKKLYDKRQDIAKKDQKREAEKDFKVKNL</sequence>
<feature type="chain" id="PRO_0000331034" description="SsrA-binding protein">
    <location>
        <begin position="1"/>
        <end position="154"/>
    </location>
</feature>
<proteinExistence type="inferred from homology"/>
<protein>
    <recommendedName>
        <fullName evidence="1">SsrA-binding protein</fullName>
    </recommendedName>
    <alternativeName>
        <fullName evidence="1">Small protein B</fullName>
    </alternativeName>
</protein>